<feature type="chain" id="PRO_1000009034" description="Adenylyl-sulfate kinase">
    <location>
        <begin position="1"/>
        <end position="201"/>
    </location>
</feature>
<feature type="active site" description="Phosphoserine intermediate" evidence="1">
    <location>
        <position position="109"/>
    </location>
</feature>
<feature type="binding site" evidence="1">
    <location>
        <begin position="35"/>
        <end position="42"/>
    </location>
    <ligand>
        <name>ATP</name>
        <dbReference type="ChEBI" id="CHEBI:30616"/>
    </ligand>
</feature>
<gene>
    <name evidence="1" type="primary">cysC</name>
    <name type="ordered locus">SF2773</name>
    <name type="ordered locus">S2966</name>
</gene>
<protein>
    <recommendedName>
        <fullName evidence="1">Adenylyl-sulfate kinase</fullName>
        <ecNumber evidence="1">2.7.1.25</ecNumber>
    </recommendedName>
    <alternativeName>
        <fullName evidence="1">APS kinase</fullName>
    </alternativeName>
    <alternativeName>
        <fullName evidence="1">ATP adenosine-5'-phosphosulfate 3'-phosphotransferase</fullName>
    </alternativeName>
    <alternativeName>
        <fullName evidence="1">Adenosine-5'-phosphosulfate kinase</fullName>
    </alternativeName>
</protein>
<sequence length="201" mass="22351">MALHDENVVWHSHPVTVQQRELHHGHRGVVLWFTGLSGSGKSTVAGALEEALHKLSVSTYLLDGDNVRHGLCSDLGFSDADRKENIRRVGEVANLMVEAGLVVLTAFISPHRAERQMVRERVGEGRFIEVFVDTPLAICEARDPKGLYKKARAGELRNFTGIDSVYEAPESAEIHLNGEQLVTNLVQQLLDLLRQNDIIRS</sequence>
<comment type="function">
    <text evidence="1">Catalyzes the synthesis of activated sulfate.</text>
</comment>
<comment type="catalytic activity">
    <reaction evidence="1">
        <text>adenosine 5'-phosphosulfate + ATP = 3'-phosphoadenylyl sulfate + ADP + H(+)</text>
        <dbReference type="Rhea" id="RHEA:24152"/>
        <dbReference type="ChEBI" id="CHEBI:15378"/>
        <dbReference type="ChEBI" id="CHEBI:30616"/>
        <dbReference type="ChEBI" id="CHEBI:58243"/>
        <dbReference type="ChEBI" id="CHEBI:58339"/>
        <dbReference type="ChEBI" id="CHEBI:456216"/>
        <dbReference type="EC" id="2.7.1.25"/>
    </reaction>
</comment>
<comment type="pathway">
    <text evidence="1">Sulfur metabolism; hydrogen sulfide biosynthesis; sulfite from sulfate: step 2/3.</text>
</comment>
<comment type="similarity">
    <text evidence="1">Belongs to the APS kinase family.</text>
</comment>
<evidence type="ECO:0000255" key="1">
    <source>
        <dbReference type="HAMAP-Rule" id="MF_00065"/>
    </source>
</evidence>
<organism>
    <name type="scientific">Shigella flexneri</name>
    <dbReference type="NCBI Taxonomy" id="623"/>
    <lineage>
        <taxon>Bacteria</taxon>
        <taxon>Pseudomonadati</taxon>
        <taxon>Pseudomonadota</taxon>
        <taxon>Gammaproteobacteria</taxon>
        <taxon>Enterobacterales</taxon>
        <taxon>Enterobacteriaceae</taxon>
        <taxon>Shigella</taxon>
    </lineage>
</organism>
<name>CYSC_SHIFL</name>
<reference key="1">
    <citation type="journal article" date="2002" name="Nucleic Acids Res.">
        <title>Genome sequence of Shigella flexneri 2a: insights into pathogenicity through comparison with genomes of Escherichia coli K12 and O157.</title>
        <authorList>
            <person name="Jin Q."/>
            <person name="Yuan Z."/>
            <person name="Xu J."/>
            <person name="Wang Y."/>
            <person name="Shen Y."/>
            <person name="Lu W."/>
            <person name="Wang J."/>
            <person name="Liu H."/>
            <person name="Yang J."/>
            <person name="Yang F."/>
            <person name="Zhang X."/>
            <person name="Zhang J."/>
            <person name="Yang G."/>
            <person name="Wu H."/>
            <person name="Qu D."/>
            <person name="Dong J."/>
            <person name="Sun L."/>
            <person name="Xue Y."/>
            <person name="Zhao A."/>
            <person name="Gao Y."/>
            <person name="Zhu J."/>
            <person name="Kan B."/>
            <person name="Ding K."/>
            <person name="Chen S."/>
            <person name="Cheng H."/>
            <person name="Yao Z."/>
            <person name="He B."/>
            <person name="Chen R."/>
            <person name="Ma D."/>
            <person name="Qiang B."/>
            <person name="Wen Y."/>
            <person name="Hou Y."/>
            <person name="Yu J."/>
        </authorList>
    </citation>
    <scope>NUCLEOTIDE SEQUENCE [LARGE SCALE GENOMIC DNA]</scope>
    <source>
        <strain>301 / Serotype 2a</strain>
    </source>
</reference>
<reference key="2">
    <citation type="journal article" date="2003" name="Infect. Immun.">
        <title>Complete genome sequence and comparative genomics of Shigella flexneri serotype 2a strain 2457T.</title>
        <authorList>
            <person name="Wei J."/>
            <person name="Goldberg M.B."/>
            <person name="Burland V."/>
            <person name="Venkatesan M.M."/>
            <person name="Deng W."/>
            <person name="Fournier G."/>
            <person name="Mayhew G.F."/>
            <person name="Plunkett G. III"/>
            <person name="Rose D.J."/>
            <person name="Darling A."/>
            <person name="Mau B."/>
            <person name="Perna N.T."/>
            <person name="Payne S.M."/>
            <person name="Runyen-Janecky L.J."/>
            <person name="Zhou S."/>
            <person name="Schwartz D.C."/>
            <person name="Blattner F.R."/>
        </authorList>
    </citation>
    <scope>NUCLEOTIDE SEQUENCE [LARGE SCALE GENOMIC DNA]</scope>
    <source>
        <strain>ATCC 700930 / 2457T / Serotype 2a</strain>
    </source>
</reference>
<dbReference type="EC" id="2.7.1.25" evidence="1"/>
<dbReference type="EMBL" id="AE005674">
    <property type="protein sequence ID" value="AAN44262.1"/>
    <property type="molecule type" value="Genomic_DNA"/>
</dbReference>
<dbReference type="EMBL" id="AE014073">
    <property type="protein sequence ID" value="AAP18088.1"/>
    <property type="molecule type" value="Genomic_DNA"/>
</dbReference>
<dbReference type="RefSeq" id="NP_708555.1">
    <property type="nucleotide sequence ID" value="NC_004337.2"/>
</dbReference>
<dbReference type="RefSeq" id="WP_001173678.1">
    <property type="nucleotide sequence ID" value="NZ_WPGW01000039.1"/>
</dbReference>
<dbReference type="SMR" id="Q83JX9"/>
<dbReference type="STRING" id="198214.SF2773"/>
<dbReference type="PaxDb" id="198214-SF2773"/>
<dbReference type="GeneID" id="1026815"/>
<dbReference type="KEGG" id="sfl:SF2773"/>
<dbReference type="KEGG" id="sfx:S2966"/>
<dbReference type="PATRIC" id="fig|198214.7.peg.3300"/>
<dbReference type="HOGENOM" id="CLU_046932_1_0_6"/>
<dbReference type="UniPathway" id="UPA00140">
    <property type="reaction ID" value="UER00205"/>
</dbReference>
<dbReference type="Proteomes" id="UP000001006">
    <property type="component" value="Chromosome"/>
</dbReference>
<dbReference type="Proteomes" id="UP000002673">
    <property type="component" value="Chromosome"/>
</dbReference>
<dbReference type="GO" id="GO:0004020">
    <property type="term" value="F:adenylylsulfate kinase activity"/>
    <property type="evidence" value="ECO:0007669"/>
    <property type="project" value="UniProtKB-UniRule"/>
</dbReference>
<dbReference type="GO" id="GO:0005524">
    <property type="term" value="F:ATP binding"/>
    <property type="evidence" value="ECO:0007669"/>
    <property type="project" value="UniProtKB-UniRule"/>
</dbReference>
<dbReference type="GO" id="GO:0070814">
    <property type="term" value="P:hydrogen sulfide biosynthetic process"/>
    <property type="evidence" value="ECO:0007669"/>
    <property type="project" value="UniProtKB-UniRule"/>
</dbReference>
<dbReference type="GO" id="GO:0000103">
    <property type="term" value="P:sulfate assimilation"/>
    <property type="evidence" value="ECO:0007669"/>
    <property type="project" value="UniProtKB-UniRule"/>
</dbReference>
<dbReference type="CDD" id="cd02027">
    <property type="entry name" value="APSK"/>
    <property type="match status" value="1"/>
</dbReference>
<dbReference type="FunFam" id="3.40.50.300:FF:000212">
    <property type="entry name" value="Adenylyl-sulfate kinase"/>
    <property type="match status" value="1"/>
</dbReference>
<dbReference type="Gene3D" id="3.40.50.300">
    <property type="entry name" value="P-loop containing nucleotide triphosphate hydrolases"/>
    <property type="match status" value="1"/>
</dbReference>
<dbReference type="HAMAP" id="MF_00065">
    <property type="entry name" value="Adenylyl_sulf_kinase"/>
    <property type="match status" value="1"/>
</dbReference>
<dbReference type="InterPro" id="IPR002891">
    <property type="entry name" value="APS_kinase"/>
</dbReference>
<dbReference type="InterPro" id="IPR027417">
    <property type="entry name" value="P-loop_NTPase"/>
</dbReference>
<dbReference type="NCBIfam" id="TIGR00455">
    <property type="entry name" value="apsK"/>
    <property type="match status" value="1"/>
</dbReference>
<dbReference type="NCBIfam" id="NF003013">
    <property type="entry name" value="PRK03846.1"/>
    <property type="match status" value="1"/>
</dbReference>
<dbReference type="PANTHER" id="PTHR11055:SF63">
    <property type="entry name" value="ADENYLYL-SULFATE KINASE 1, CHLOROPLASTIC"/>
    <property type="match status" value="1"/>
</dbReference>
<dbReference type="PANTHER" id="PTHR11055">
    <property type="entry name" value="BIFUNCTIONAL 3'-PHOSPHOADENOSINE 5'-PHOSPHOSULFATE SYNTHASE"/>
    <property type="match status" value="1"/>
</dbReference>
<dbReference type="Pfam" id="PF01583">
    <property type="entry name" value="APS_kinase"/>
    <property type="match status" value="1"/>
</dbReference>
<dbReference type="SUPFAM" id="SSF52540">
    <property type="entry name" value="P-loop containing nucleoside triphosphate hydrolases"/>
    <property type="match status" value="1"/>
</dbReference>
<proteinExistence type="inferred from homology"/>
<accession>Q83JX9</accession>
<accession>Q7C090</accession>
<keyword id="KW-0067">ATP-binding</keyword>
<keyword id="KW-0418">Kinase</keyword>
<keyword id="KW-0547">Nucleotide-binding</keyword>
<keyword id="KW-0597">Phosphoprotein</keyword>
<keyword id="KW-1185">Reference proteome</keyword>
<keyword id="KW-0808">Transferase</keyword>